<reference key="1">
    <citation type="journal article" date="2006" name="Mol. Genet. Genomics">
        <title>The chloroplast genome of Nicotiana sylvestris and Nicotiana tomentosiformis: complete sequencing confirms that the Nicotiana sylvestris progenitor is the maternal genome donor of Nicotiana tabacum.</title>
        <authorList>
            <person name="Yukawa M."/>
            <person name="Tsudzuki T."/>
            <person name="Sugiura M."/>
        </authorList>
    </citation>
    <scope>NUCLEOTIDE SEQUENCE [LARGE SCALE GENOMIC DNA]</scope>
</reference>
<dbReference type="EMBL" id="AB240139">
    <property type="protein sequence ID" value="BAE48030.1"/>
    <property type="molecule type" value="Genomic_DNA"/>
</dbReference>
<dbReference type="RefSeq" id="YP_398891.1">
    <property type="nucleotide sequence ID" value="NC_007602.1"/>
</dbReference>
<dbReference type="SMR" id="Q33C05"/>
<dbReference type="GeneID" id="3776286"/>
<dbReference type="KEGG" id="nto:3776286"/>
<dbReference type="OrthoDB" id="1558483at2759"/>
<dbReference type="GO" id="GO:0009535">
    <property type="term" value="C:chloroplast thylakoid membrane"/>
    <property type="evidence" value="ECO:0007669"/>
    <property type="project" value="UniProtKB-SubCell"/>
</dbReference>
<dbReference type="GO" id="GO:0009539">
    <property type="term" value="C:photosystem II reaction center"/>
    <property type="evidence" value="ECO:0007669"/>
    <property type="project" value="InterPro"/>
</dbReference>
<dbReference type="GO" id="GO:0015979">
    <property type="term" value="P:photosynthesis"/>
    <property type="evidence" value="ECO:0007669"/>
    <property type="project" value="UniProtKB-UniRule"/>
</dbReference>
<dbReference type="HAMAP" id="MF_00808">
    <property type="entry name" value="PSII_PsbT"/>
    <property type="match status" value="1"/>
</dbReference>
<dbReference type="InterPro" id="IPR001743">
    <property type="entry name" value="PSII_PsbT"/>
</dbReference>
<dbReference type="InterPro" id="IPR037268">
    <property type="entry name" value="PSII_PsbT_sf"/>
</dbReference>
<dbReference type="PANTHER" id="PTHR36411">
    <property type="match status" value="1"/>
</dbReference>
<dbReference type="PANTHER" id="PTHR36411:SF2">
    <property type="entry name" value="PHOTOSYSTEM II REACTION CENTER PROTEIN T"/>
    <property type="match status" value="1"/>
</dbReference>
<dbReference type="Pfam" id="PF01405">
    <property type="entry name" value="PsbT"/>
    <property type="match status" value="1"/>
</dbReference>
<dbReference type="SUPFAM" id="SSF161029">
    <property type="entry name" value="Photosystem II reaction center protein T, PsbT"/>
    <property type="match status" value="1"/>
</dbReference>
<feature type="chain" id="PRO_0000276303" description="Photosystem II reaction center protein T">
    <location>
        <begin position="1"/>
        <end position="34"/>
    </location>
</feature>
<feature type="transmembrane region" description="Helical" evidence="1">
    <location>
        <begin position="3"/>
        <end position="23"/>
    </location>
</feature>
<accession>Q33C05</accession>
<gene>
    <name evidence="1" type="primary">psbT</name>
</gene>
<organism>
    <name type="scientific">Nicotiana tomentosiformis</name>
    <name type="common">Tobacco</name>
    <dbReference type="NCBI Taxonomy" id="4098"/>
    <lineage>
        <taxon>Eukaryota</taxon>
        <taxon>Viridiplantae</taxon>
        <taxon>Streptophyta</taxon>
        <taxon>Embryophyta</taxon>
        <taxon>Tracheophyta</taxon>
        <taxon>Spermatophyta</taxon>
        <taxon>Magnoliopsida</taxon>
        <taxon>eudicotyledons</taxon>
        <taxon>Gunneridae</taxon>
        <taxon>Pentapetalae</taxon>
        <taxon>asterids</taxon>
        <taxon>lamiids</taxon>
        <taxon>Solanales</taxon>
        <taxon>Solanaceae</taxon>
        <taxon>Nicotianoideae</taxon>
        <taxon>Nicotianeae</taxon>
        <taxon>Nicotiana</taxon>
    </lineage>
</organism>
<name>PSBT_NICTO</name>
<sequence length="34" mass="3932">MEALVYTFLLVSTLGIIFFAIFFREPPKVPTKKN</sequence>
<proteinExistence type="inferred from homology"/>
<keyword id="KW-0150">Chloroplast</keyword>
<keyword id="KW-0472">Membrane</keyword>
<keyword id="KW-0602">Photosynthesis</keyword>
<keyword id="KW-0604">Photosystem II</keyword>
<keyword id="KW-0934">Plastid</keyword>
<keyword id="KW-0793">Thylakoid</keyword>
<keyword id="KW-0812">Transmembrane</keyword>
<keyword id="KW-1133">Transmembrane helix</keyword>
<geneLocation type="chloroplast"/>
<protein>
    <recommendedName>
        <fullName evidence="1">Photosystem II reaction center protein T</fullName>
        <shortName evidence="1">PSII-T</shortName>
    </recommendedName>
</protein>
<comment type="function">
    <text evidence="1">Found at the monomer-monomer interface of the photosystem II (PS II) dimer, plays a role in assembly and dimerization of PSII. PSII is a light-driven water plastoquinone oxidoreductase, using light energy to abstract electrons from H(2)O, generating a proton gradient subsequently used for ATP formation.</text>
</comment>
<comment type="subunit">
    <text evidence="1">PSII is composed of 1 copy each of membrane proteins PsbA, PsbB, PsbC, PsbD, PsbE, PsbF, PsbH, PsbI, PsbJ, PsbK, PsbL, PsbM, PsbT, PsbY, PsbZ, Psb30/Ycf12, at least 3 peripheral proteins of the oxygen-evolving complex and a large number of cofactors. It forms dimeric complexes.</text>
</comment>
<comment type="subcellular location">
    <subcellularLocation>
        <location evidence="1">Plastid</location>
        <location evidence="1">Chloroplast thylakoid membrane</location>
        <topology evidence="1">Single-pass membrane protein</topology>
    </subcellularLocation>
</comment>
<comment type="similarity">
    <text evidence="1">Belongs to the PsbT family.</text>
</comment>
<evidence type="ECO:0000255" key="1">
    <source>
        <dbReference type="HAMAP-Rule" id="MF_00808"/>
    </source>
</evidence>